<organism>
    <name type="scientific">Methanothermobacter thermautotrophicus (strain ATCC 29096 / DSM 1053 / JCM 10044 / NBRC 100330 / Delta H)</name>
    <name type="common">Methanobacterium thermoautotrophicum</name>
    <dbReference type="NCBI Taxonomy" id="187420"/>
    <lineage>
        <taxon>Archaea</taxon>
        <taxon>Methanobacteriati</taxon>
        <taxon>Methanobacteriota</taxon>
        <taxon>Methanomada group</taxon>
        <taxon>Methanobacteria</taxon>
        <taxon>Methanobacteriales</taxon>
        <taxon>Methanobacteriaceae</taxon>
        <taxon>Methanothermobacter</taxon>
    </lineage>
</organism>
<keyword id="KW-0963">Cytoplasm</keyword>
<keyword id="KW-0324">Glycolysis</keyword>
<keyword id="KW-0520">NAD</keyword>
<keyword id="KW-0521">NADP</keyword>
<keyword id="KW-0560">Oxidoreductase</keyword>
<keyword id="KW-1185">Reference proteome</keyword>
<reference key="1">
    <citation type="journal article" date="1997" name="J. Bacteriol.">
        <title>Complete genome sequence of Methanobacterium thermoautotrophicum deltaH: functional analysis and comparative genomics.</title>
        <authorList>
            <person name="Smith D.R."/>
            <person name="Doucette-Stamm L.A."/>
            <person name="Deloughery C."/>
            <person name="Lee H.-M."/>
            <person name="Dubois J."/>
            <person name="Aldredge T."/>
            <person name="Bashirzadeh R."/>
            <person name="Blakely D."/>
            <person name="Cook R."/>
            <person name="Gilbert K."/>
            <person name="Harrison D."/>
            <person name="Hoang L."/>
            <person name="Keagle P."/>
            <person name="Lumm W."/>
            <person name="Pothier B."/>
            <person name="Qiu D."/>
            <person name="Spadafora R."/>
            <person name="Vicare R."/>
            <person name="Wang Y."/>
            <person name="Wierzbowski J."/>
            <person name="Gibson R."/>
            <person name="Jiwani N."/>
            <person name="Caruso A."/>
            <person name="Bush D."/>
            <person name="Safer H."/>
            <person name="Patwell D."/>
            <person name="Prabhakar S."/>
            <person name="McDougall S."/>
            <person name="Shimer G."/>
            <person name="Goyal A."/>
            <person name="Pietrovski S."/>
            <person name="Church G.M."/>
            <person name="Daniels C.J."/>
            <person name="Mao J.-I."/>
            <person name="Rice P."/>
            <person name="Noelling J."/>
            <person name="Reeve J.N."/>
        </authorList>
    </citation>
    <scope>NUCLEOTIDE SEQUENCE [LARGE SCALE GENOMIC DNA]</scope>
    <source>
        <strain>ATCC 29096 / DSM 1053 / JCM 10044 / NBRC 100330 / Delta H</strain>
    </source>
</reference>
<evidence type="ECO:0000250" key="1"/>
<evidence type="ECO:0000305" key="2"/>
<comment type="catalytic activity">
    <reaction>
        <text>D-glyceraldehyde 3-phosphate + phosphate + NADP(+) = (2R)-3-phospho-glyceroyl phosphate + NADPH + H(+)</text>
        <dbReference type="Rhea" id="RHEA:10296"/>
        <dbReference type="ChEBI" id="CHEBI:15378"/>
        <dbReference type="ChEBI" id="CHEBI:43474"/>
        <dbReference type="ChEBI" id="CHEBI:57604"/>
        <dbReference type="ChEBI" id="CHEBI:57783"/>
        <dbReference type="ChEBI" id="CHEBI:58349"/>
        <dbReference type="ChEBI" id="CHEBI:59776"/>
        <dbReference type="EC" id="1.2.1.59"/>
    </reaction>
</comment>
<comment type="catalytic activity">
    <reaction>
        <text>D-glyceraldehyde 3-phosphate + phosphate + NAD(+) = (2R)-3-phospho-glyceroyl phosphate + NADH + H(+)</text>
        <dbReference type="Rhea" id="RHEA:10300"/>
        <dbReference type="ChEBI" id="CHEBI:15378"/>
        <dbReference type="ChEBI" id="CHEBI:43474"/>
        <dbReference type="ChEBI" id="CHEBI:57540"/>
        <dbReference type="ChEBI" id="CHEBI:57604"/>
        <dbReference type="ChEBI" id="CHEBI:57945"/>
        <dbReference type="ChEBI" id="CHEBI:59776"/>
        <dbReference type="EC" id="1.2.1.59"/>
    </reaction>
</comment>
<comment type="pathway">
    <text>Carbohydrate degradation; glycolysis; pyruvate from D-glyceraldehyde 3-phosphate: step 1/5.</text>
</comment>
<comment type="subunit">
    <text evidence="1">Homotetramer.</text>
</comment>
<comment type="subcellular location">
    <subcellularLocation>
        <location evidence="1">Cytoplasm</location>
    </subcellularLocation>
</comment>
<comment type="similarity">
    <text evidence="2">Belongs to the glyceraldehyde-3-phosphate dehydrogenase family.</text>
</comment>
<dbReference type="EC" id="1.2.1.59"/>
<dbReference type="EMBL" id="AE000666">
    <property type="protein sequence ID" value="AAB85505.1"/>
    <property type="molecule type" value="Genomic_DNA"/>
</dbReference>
<dbReference type="PIR" id="E69001">
    <property type="entry name" value="E69001"/>
</dbReference>
<dbReference type="RefSeq" id="WP_010876640.1">
    <property type="nucleotide sequence ID" value="NC_000916.1"/>
</dbReference>
<dbReference type="SMR" id="O27090"/>
<dbReference type="FunCoup" id="O27090">
    <property type="interactions" value="153"/>
</dbReference>
<dbReference type="STRING" id="187420.MTH_1009"/>
<dbReference type="PaxDb" id="187420-MTH_1009"/>
<dbReference type="EnsemblBacteria" id="AAB85505">
    <property type="protein sequence ID" value="AAB85505"/>
    <property type="gene ID" value="MTH_1009"/>
</dbReference>
<dbReference type="GeneID" id="1471417"/>
<dbReference type="KEGG" id="mth:MTH_1009"/>
<dbReference type="PATRIC" id="fig|187420.15.peg.992"/>
<dbReference type="HOGENOM" id="CLU_069533_0_0_2"/>
<dbReference type="InParanoid" id="O27090"/>
<dbReference type="UniPathway" id="UPA00109">
    <property type="reaction ID" value="UER00184"/>
</dbReference>
<dbReference type="Proteomes" id="UP000005223">
    <property type="component" value="Chromosome"/>
</dbReference>
<dbReference type="GO" id="GO:0005737">
    <property type="term" value="C:cytoplasm"/>
    <property type="evidence" value="ECO:0007669"/>
    <property type="project" value="UniProtKB-SubCell"/>
</dbReference>
<dbReference type="GO" id="GO:0008839">
    <property type="term" value="F:4-hydroxy-tetrahydrodipicolinate reductase"/>
    <property type="evidence" value="ECO:0007669"/>
    <property type="project" value="InterPro"/>
</dbReference>
<dbReference type="GO" id="GO:0004365">
    <property type="term" value="F:glyceraldehyde-3-phosphate dehydrogenase (NAD+) (phosphorylating) activity"/>
    <property type="evidence" value="ECO:0007669"/>
    <property type="project" value="UniProtKB-UniRule"/>
</dbReference>
<dbReference type="GO" id="GO:0047100">
    <property type="term" value="F:glyceraldehyde-3-phosphate dehydrogenase (NADP+) (phosphorylating) activity"/>
    <property type="evidence" value="ECO:0007669"/>
    <property type="project" value="RHEA"/>
</dbReference>
<dbReference type="GO" id="GO:0051287">
    <property type="term" value="F:NAD binding"/>
    <property type="evidence" value="ECO:0007669"/>
    <property type="project" value="InterPro"/>
</dbReference>
<dbReference type="GO" id="GO:0050661">
    <property type="term" value="F:NADP binding"/>
    <property type="evidence" value="ECO:0007669"/>
    <property type="project" value="InterPro"/>
</dbReference>
<dbReference type="GO" id="GO:0006096">
    <property type="term" value="P:glycolytic process"/>
    <property type="evidence" value="ECO:0007669"/>
    <property type="project" value="UniProtKB-UniRule"/>
</dbReference>
<dbReference type="GO" id="GO:0009089">
    <property type="term" value="P:lysine biosynthetic process via diaminopimelate"/>
    <property type="evidence" value="ECO:0007669"/>
    <property type="project" value="InterPro"/>
</dbReference>
<dbReference type="CDD" id="cd18127">
    <property type="entry name" value="GAPDH_II_C"/>
    <property type="match status" value="1"/>
</dbReference>
<dbReference type="CDD" id="cd02278">
    <property type="entry name" value="GAPDH_II_N"/>
    <property type="match status" value="1"/>
</dbReference>
<dbReference type="Gene3D" id="3.30.360.10">
    <property type="entry name" value="Dihydrodipicolinate Reductase, domain 2"/>
    <property type="match status" value="1"/>
</dbReference>
<dbReference type="Gene3D" id="3.40.50.720">
    <property type="entry name" value="NAD(P)-binding Rossmann-like Domain"/>
    <property type="match status" value="1"/>
</dbReference>
<dbReference type="HAMAP" id="MF_00559">
    <property type="entry name" value="G3P_dehdrog_arch"/>
    <property type="match status" value="1"/>
</dbReference>
<dbReference type="InterPro" id="IPR000846">
    <property type="entry name" value="DapB_N"/>
</dbReference>
<dbReference type="InterPro" id="IPR020831">
    <property type="entry name" value="GlycerAld/Erythrose_P_DH"/>
</dbReference>
<dbReference type="InterPro" id="IPR020830">
    <property type="entry name" value="GlycerAld_3-P_DH_AS"/>
</dbReference>
<dbReference type="InterPro" id="IPR020829">
    <property type="entry name" value="GlycerAld_3-P_DH_cat"/>
</dbReference>
<dbReference type="InterPro" id="IPR020828">
    <property type="entry name" value="GlycerAld_3-P_DH_NAD(P)-bd"/>
</dbReference>
<dbReference type="InterPro" id="IPR006436">
    <property type="entry name" value="Glyceraldehyde-3-P_DH_2_arc"/>
</dbReference>
<dbReference type="InterPro" id="IPR036291">
    <property type="entry name" value="NAD(P)-bd_dom_sf"/>
</dbReference>
<dbReference type="NCBIfam" id="TIGR01546">
    <property type="entry name" value="GAPDH-II_archae"/>
    <property type="match status" value="1"/>
</dbReference>
<dbReference type="NCBIfam" id="NF003251">
    <property type="entry name" value="PRK04207.1"/>
    <property type="match status" value="1"/>
</dbReference>
<dbReference type="Pfam" id="PF01113">
    <property type="entry name" value="DapB_N"/>
    <property type="match status" value="1"/>
</dbReference>
<dbReference type="Pfam" id="PF02800">
    <property type="entry name" value="Gp_dh_C"/>
    <property type="match status" value="1"/>
</dbReference>
<dbReference type="PIRSF" id="PIRSF000149">
    <property type="entry name" value="GAP_DH"/>
    <property type="match status" value="1"/>
</dbReference>
<dbReference type="SMART" id="SM00846">
    <property type="entry name" value="Gp_dh_N"/>
    <property type="match status" value="1"/>
</dbReference>
<dbReference type="SUPFAM" id="SSF55347">
    <property type="entry name" value="Glyceraldehyde-3-phosphate dehydrogenase-like, C-terminal domain"/>
    <property type="match status" value="1"/>
</dbReference>
<dbReference type="SUPFAM" id="SSF51735">
    <property type="entry name" value="NAD(P)-binding Rossmann-fold domains"/>
    <property type="match status" value="1"/>
</dbReference>
<dbReference type="PROSITE" id="PS00071">
    <property type="entry name" value="GAPDH"/>
    <property type="match status" value="1"/>
</dbReference>
<accession>O27090</accession>
<sequence>MISVAINGYGTIGKRVADAVAAQDDMKVAGVSKTKPDFEARVAIEKGYDLYVSIPEREKLFGEAGIPVSGTVEDMLEEADIVVDATPEGIGAKNLEMYREKGIKAIFQGGEKHDAIGLSFNSFANYDESLGADYTRVVSCNTTGLCRTLKPIDDLCGIKKVRAVMVRRGADPVQVKKGPINAIVPNPPTVPSHHGPDLKTVMKGVNIHTVALLVPTTLMHQHNIMVELEDPVEADEIKARLDETTRVMLVRASEGLASTAEIMEYAKELGRSRNDLFEIPVWEESINVVDGELFYMQAVHQESDAVPESVDAIRALLELEEDNMKSIMKTNRAMGIL</sequence>
<feature type="chain" id="PRO_0000145726" description="Glyceraldehyde-3-phosphate dehydrogenase">
    <location>
        <begin position="1"/>
        <end position="337"/>
    </location>
</feature>
<feature type="active site" description="Nucleophile" evidence="1">
    <location>
        <position position="140"/>
    </location>
</feature>
<feature type="binding site" evidence="1">
    <location>
        <begin position="11"/>
        <end position="12"/>
    </location>
    <ligand>
        <name>NAD(+)</name>
        <dbReference type="ChEBI" id="CHEBI:57540"/>
    </ligand>
</feature>
<feature type="binding site" evidence="1">
    <location>
        <position position="110"/>
    </location>
    <ligand>
        <name>NAD(+)</name>
        <dbReference type="ChEBI" id="CHEBI:57540"/>
    </ligand>
</feature>
<feature type="binding site" evidence="1">
    <location>
        <begin position="139"/>
        <end position="141"/>
    </location>
    <ligand>
        <name>D-glyceraldehyde 3-phosphate</name>
        <dbReference type="ChEBI" id="CHEBI:59776"/>
    </ligand>
</feature>
<feature type="binding site" evidence="1">
    <location>
        <position position="168"/>
    </location>
    <ligand>
        <name>NAD(+)</name>
        <dbReference type="ChEBI" id="CHEBI:57540"/>
    </ligand>
</feature>
<feature type="binding site" evidence="1">
    <location>
        <begin position="194"/>
        <end position="195"/>
    </location>
    <ligand>
        <name>D-glyceraldehyde 3-phosphate</name>
        <dbReference type="ChEBI" id="CHEBI:59776"/>
    </ligand>
</feature>
<feature type="binding site" evidence="1">
    <location>
        <position position="301"/>
    </location>
    <ligand>
        <name>NAD(+)</name>
        <dbReference type="ChEBI" id="CHEBI:57540"/>
    </ligand>
</feature>
<proteinExistence type="inferred from homology"/>
<name>G3P_METTH</name>
<gene>
    <name type="primary">gap</name>
    <name type="ordered locus">MTH_1009</name>
</gene>
<protein>
    <recommendedName>
        <fullName>Glyceraldehyde-3-phosphate dehydrogenase</fullName>
        <shortName>GAPDH</shortName>
        <ecNumber>1.2.1.59</ecNumber>
    </recommendedName>
    <alternativeName>
        <fullName>NAD(P)-dependent glyceraldehyde-3-phosphate dehydrogenase</fullName>
    </alternativeName>
</protein>